<keyword id="KW-0131">Cell cycle</keyword>
<keyword id="KW-0132">Cell division</keyword>
<keyword id="KW-0963">Cytoplasm</keyword>
<keyword id="KW-0717">Septation</keyword>
<protein>
    <recommendedName>
        <fullName evidence="1">Cell division protein SepF</fullName>
    </recommendedName>
</protein>
<name>SEPF_STAAB</name>
<feature type="chain" id="PRO_0000334074" description="Cell division protein SepF">
    <location>
        <begin position="1"/>
        <end position="187"/>
    </location>
</feature>
<feature type="region of interest" description="Disordered" evidence="2">
    <location>
        <begin position="21"/>
        <end position="97"/>
    </location>
</feature>
<feature type="compositionally biased region" description="Polar residues" evidence="2">
    <location>
        <begin position="38"/>
        <end position="63"/>
    </location>
</feature>
<feature type="compositionally biased region" description="Polar residues" evidence="2">
    <location>
        <begin position="70"/>
        <end position="97"/>
    </location>
</feature>
<organism>
    <name type="scientific">Staphylococcus aureus (strain bovine RF122 / ET3-1)</name>
    <dbReference type="NCBI Taxonomy" id="273036"/>
    <lineage>
        <taxon>Bacteria</taxon>
        <taxon>Bacillati</taxon>
        <taxon>Bacillota</taxon>
        <taxon>Bacilli</taxon>
        <taxon>Bacillales</taxon>
        <taxon>Staphylococcaceae</taxon>
        <taxon>Staphylococcus</taxon>
    </lineage>
</organism>
<gene>
    <name evidence="1" type="primary">sepF</name>
    <name type="ordered locus">SAB1053</name>
</gene>
<evidence type="ECO:0000255" key="1">
    <source>
        <dbReference type="HAMAP-Rule" id="MF_01197"/>
    </source>
</evidence>
<evidence type="ECO:0000256" key="2">
    <source>
        <dbReference type="SAM" id="MobiDB-lite"/>
    </source>
</evidence>
<accession>Q2YXF5</accession>
<dbReference type="EMBL" id="AJ938182">
    <property type="protein sequence ID" value="CAI80742.1"/>
    <property type="molecule type" value="Genomic_DNA"/>
</dbReference>
<dbReference type="RefSeq" id="WP_000018608.1">
    <property type="nucleotide sequence ID" value="NC_007622.1"/>
</dbReference>
<dbReference type="SMR" id="Q2YXF5"/>
<dbReference type="KEGG" id="sab:SAB1053"/>
<dbReference type="HOGENOM" id="CLU_078499_4_1_9"/>
<dbReference type="GO" id="GO:0005737">
    <property type="term" value="C:cytoplasm"/>
    <property type="evidence" value="ECO:0007669"/>
    <property type="project" value="UniProtKB-SubCell"/>
</dbReference>
<dbReference type="GO" id="GO:0000917">
    <property type="term" value="P:division septum assembly"/>
    <property type="evidence" value="ECO:0007669"/>
    <property type="project" value="UniProtKB-KW"/>
</dbReference>
<dbReference type="GO" id="GO:0043093">
    <property type="term" value="P:FtsZ-dependent cytokinesis"/>
    <property type="evidence" value="ECO:0007669"/>
    <property type="project" value="UniProtKB-UniRule"/>
</dbReference>
<dbReference type="Gene3D" id="3.30.110.150">
    <property type="entry name" value="SepF-like protein"/>
    <property type="match status" value="1"/>
</dbReference>
<dbReference type="HAMAP" id="MF_01197">
    <property type="entry name" value="SepF"/>
    <property type="match status" value="1"/>
</dbReference>
<dbReference type="InterPro" id="IPR023052">
    <property type="entry name" value="Cell_div_SepF"/>
</dbReference>
<dbReference type="InterPro" id="IPR007561">
    <property type="entry name" value="Cell_div_SepF/SepF-rel"/>
</dbReference>
<dbReference type="InterPro" id="IPR038594">
    <property type="entry name" value="SepF-like_sf"/>
</dbReference>
<dbReference type="PANTHER" id="PTHR35798">
    <property type="entry name" value="CELL DIVISION PROTEIN SEPF"/>
    <property type="match status" value="1"/>
</dbReference>
<dbReference type="PANTHER" id="PTHR35798:SF1">
    <property type="entry name" value="CELL DIVISION PROTEIN SEPF"/>
    <property type="match status" value="1"/>
</dbReference>
<dbReference type="Pfam" id="PF04472">
    <property type="entry name" value="SepF"/>
    <property type="match status" value="1"/>
</dbReference>
<proteinExistence type="inferred from homology"/>
<sequence>MSHLALKDLFSGFFVIDDEEEVEVPDKQQQVNEAPAKEQSQQTTKQNAIKSVPQKSASRYTTTSEERNNRMSNYSKNNSRNVVTMNNATPNNASQESSKMCLFEPRVFSDTQDIADELKNRRATLVNLQRIDKVSAKRIIDFLSGTVYAIGGDIQRVGTDIFLCTPDNVEVAGSITDHIENMEHSFD</sequence>
<reference key="1">
    <citation type="journal article" date="2007" name="PLoS ONE">
        <title>Molecular correlates of host specialization in Staphylococcus aureus.</title>
        <authorList>
            <person name="Herron-Olson L."/>
            <person name="Fitzgerald J.R."/>
            <person name="Musser J.M."/>
            <person name="Kapur V."/>
        </authorList>
    </citation>
    <scope>NUCLEOTIDE SEQUENCE [LARGE SCALE GENOMIC DNA]</scope>
    <source>
        <strain>bovine RF122 / ET3-1</strain>
    </source>
</reference>
<comment type="function">
    <text evidence="1">Cell division protein that is part of the divisome complex and is recruited early to the Z-ring. Probably stimulates Z-ring formation, perhaps through the cross-linking of FtsZ protofilaments. Its function overlaps with FtsA.</text>
</comment>
<comment type="subunit">
    <text evidence="1">Homodimer. Interacts with FtsZ.</text>
</comment>
<comment type="subcellular location">
    <subcellularLocation>
        <location evidence="1">Cytoplasm</location>
    </subcellularLocation>
    <text evidence="1">Localizes to the division site, in a FtsZ-dependent manner.</text>
</comment>
<comment type="similarity">
    <text evidence="1">Belongs to the SepF family.</text>
</comment>